<keyword id="KW-1185">Reference proteome</keyword>
<organism>
    <name type="scientific">Bacillus subtilis (strain 168)</name>
    <dbReference type="NCBI Taxonomy" id="224308"/>
    <lineage>
        <taxon>Bacteria</taxon>
        <taxon>Bacillati</taxon>
        <taxon>Bacillota</taxon>
        <taxon>Bacilli</taxon>
        <taxon>Bacillales</taxon>
        <taxon>Bacillaceae</taxon>
        <taxon>Bacillus</taxon>
    </lineage>
</organism>
<accession>C0H3Y1</accession>
<feature type="chain" id="PRO_0000380077" description="Uncharacterized protein YhzD">
    <location>
        <begin position="1"/>
        <end position="61"/>
    </location>
</feature>
<proteinExistence type="predicted"/>
<gene>
    <name type="primary">yhzD</name>
    <name type="ordered locus">BSU09889</name>
</gene>
<sequence>MADYFLTVFDPSGNTLVNEQFEAEHEEAAKTHGEALLKEKELHSHTHRLVNAAGKLILFHR</sequence>
<dbReference type="EMBL" id="AL009126">
    <property type="protein sequence ID" value="CAX52586.1"/>
    <property type="molecule type" value="Genomic_DNA"/>
</dbReference>
<dbReference type="RefSeq" id="WP_003233264.1">
    <property type="nucleotide sequence ID" value="NZ_OZ025638.1"/>
</dbReference>
<dbReference type="RefSeq" id="YP_003097698.1">
    <property type="nucleotide sequence ID" value="NC_000964.3"/>
</dbReference>
<dbReference type="SMR" id="C0H3Y1"/>
<dbReference type="FunCoup" id="C0H3Y1">
    <property type="interactions" value="170"/>
</dbReference>
<dbReference type="STRING" id="224308.BSU09889"/>
<dbReference type="PaxDb" id="224308-BSU09889"/>
<dbReference type="EnsemblBacteria" id="CAX52586">
    <property type="protein sequence ID" value="CAX52586"/>
    <property type="gene ID" value="BSU_09889"/>
</dbReference>
<dbReference type="GeneID" id="8303023"/>
<dbReference type="KEGG" id="bsu:BSU09889"/>
<dbReference type="PATRIC" id="fig|224308.179.peg.1061"/>
<dbReference type="eggNOG" id="ENOG5032ZBV">
    <property type="taxonomic scope" value="Bacteria"/>
</dbReference>
<dbReference type="InParanoid" id="C0H3Y1"/>
<dbReference type="OrthoDB" id="2355652at2"/>
<dbReference type="BioCyc" id="BSUB:BSU09889-MONOMER"/>
<dbReference type="Proteomes" id="UP000001570">
    <property type="component" value="Chromosome"/>
</dbReference>
<dbReference type="InterPro" id="IPR025544">
    <property type="entry name" value="YhzD"/>
</dbReference>
<dbReference type="Pfam" id="PF14120">
    <property type="entry name" value="YhzD"/>
    <property type="match status" value="1"/>
</dbReference>
<reference key="1">
    <citation type="journal article" date="1997" name="Nature">
        <title>The complete genome sequence of the Gram-positive bacterium Bacillus subtilis.</title>
        <authorList>
            <person name="Kunst F."/>
            <person name="Ogasawara N."/>
            <person name="Moszer I."/>
            <person name="Albertini A.M."/>
            <person name="Alloni G."/>
            <person name="Azevedo V."/>
            <person name="Bertero M.G."/>
            <person name="Bessieres P."/>
            <person name="Bolotin A."/>
            <person name="Borchert S."/>
            <person name="Borriss R."/>
            <person name="Boursier L."/>
            <person name="Brans A."/>
            <person name="Braun M."/>
            <person name="Brignell S.C."/>
            <person name="Bron S."/>
            <person name="Brouillet S."/>
            <person name="Bruschi C.V."/>
            <person name="Caldwell B."/>
            <person name="Capuano V."/>
            <person name="Carter N.M."/>
            <person name="Choi S.-K."/>
            <person name="Codani J.-J."/>
            <person name="Connerton I.F."/>
            <person name="Cummings N.J."/>
            <person name="Daniel R.A."/>
            <person name="Denizot F."/>
            <person name="Devine K.M."/>
            <person name="Duesterhoeft A."/>
            <person name="Ehrlich S.D."/>
            <person name="Emmerson P.T."/>
            <person name="Entian K.-D."/>
            <person name="Errington J."/>
            <person name="Fabret C."/>
            <person name="Ferrari E."/>
            <person name="Foulger D."/>
            <person name="Fritz C."/>
            <person name="Fujita M."/>
            <person name="Fujita Y."/>
            <person name="Fuma S."/>
            <person name="Galizzi A."/>
            <person name="Galleron N."/>
            <person name="Ghim S.-Y."/>
            <person name="Glaser P."/>
            <person name="Goffeau A."/>
            <person name="Golightly E.J."/>
            <person name="Grandi G."/>
            <person name="Guiseppi G."/>
            <person name="Guy B.J."/>
            <person name="Haga K."/>
            <person name="Haiech J."/>
            <person name="Harwood C.R."/>
            <person name="Henaut A."/>
            <person name="Hilbert H."/>
            <person name="Holsappel S."/>
            <person name="Hosono S."/>
            <person name="Hullo M.-F."/>
            <person name="Itaya M."/>
            <person name="Jones L.-M."/>
            <person name="Joris B."/>
            <person name="Karamata D."/>
            <person name="Kasahara Y."/>
            <person name="Klaerr-Blanchard M."/>
            <person name="Klein C."/>
            <person name="Kobayashi Y."/>
            <person name="Koetter P."/>
            <person name="Koningstein G."/>
            <person name="Krogh S."/>
            <person name="Kumano M."/>
            <person name="Kurita K."/>
            <person name="Lapidus A."/>
            <person name="Lardinois S."/>
            <person name="Lauber J."/>
            <person name="Lazarevic V."/>
            <person name="Lee S.-M."/>
            <person name="Levine A."/>
            <person name="Liu H."/>
            <person name="Masuda S."/>
            <person name="Mauel C."/>
            <person name="Medigue C."/>
            <person name="Medina N."/>
            <person name="Mellado R.P."/>
            <person name="Mizuno M."/>
            <person name="Moestl D."/>
            <person name="Nakai S."/>
            <person name="Noback M."/>
            <person name="Noone D."/>
            <person name="O'Reilly M."/>
            <person name="Ogawa K."/>
            <person name="Ogiwara A."/>
            <person name="Oudega B."/>
            <person name="Park S.-H."/>
            <person name="Parro V."/>
            <person name="Pohl T.M."/>
            <person name="Portetelle D."/>
            <person name="Porwollik S."/>
            <person name="Prescott A.M."/>
            <person name="Presecan E."/>
            <person name="Pujic P."/>
            <person name="Purnelle B."/>
            <person name="Rapoport G."/>
            <person name="Rey M."/>
            <person name="Reynolds S."/>
            <person name="Rieger M."/>
            <person name="Rivolta C."/>
            <person name="Rocha E."/>
            <person name="Roche B."/>
            <person name="Rose M."/>
            <person name="Sadaie Y."/>
            <person name="Sato T."/>
            <person name="Scanlan E."/>
            <person name="Schleich S."/>
            <person name="Schroeter R."/>
            <person name="Scoffone F."/>
            <person name="Sekiguchi J."/>
            <person name="Sekowska A."/>
            <person name="Seror S.J."/>
            <person name="Serror P."/>
            <person name="Shin B.-S."/>
            <person name="Soldo B."/>
            <person name="Sorokin A."/>
            <person name="Tacconi E."/>
            <person name="Takagi T."/>
            <person name="Takahashi H."/>
            <person name="Takemaru K."/>
            <person name="Takeuchi M."/>
            <person name="Tamakoshi A."/>
            <person name="Tanaka T."/>
            <person name="Terpstra P."/>
            <person name="Tognoni A."/>
            <person name="Tosato V."/>
            <person name="Uchiyama S."/>
            <person name="Vandenbol M."/>
            <person name="Vannier F."/>
            <person name="Vassarotti A."/>
            <person name="Viari A."/>
            <person name="Wambutt R."/>
            <person name="Wedler E."/>
            <person name="Wedler H."/>
            <person name="Weitzenegger T."/>
            <person name="Winters P."/>
            <person name="Wipat A."/>
            <person name="Yamamoto H."/>
            <person name="Yamane K."/>
            <person name="Yasumoto K."/>
            <person name="Yata K."/>
            <person name="Yoshida K."/>
            <person name="Yoshikawa H.-F."/>
            <person name="Zumstein E."/>
            <person name="Yoshikawa H."/>
            <person name="Danchin A."/>
        </authorList>
    </citation>
    <scope>NUCLEOTIDE SEQUENCE [LARGE SCALE GENOMIC DNA]</scope>
    <source>
        <strain>168</strain>
    </source>
</reference>
<name>YHZD_BACSU</name>
<protein>
    <recommendedName>
        <fullName>Uncharacterized protein YhzD</fullName>
    </recommendedName>
</protein>